<evidence type="ECO:0000255" key="1">
    <source>
        <dbReference type="HAMAP-Rule" id="MF_00093"/>
    </source>
</evidence>
<comment type="function">
    <text evidence="1">Peptide chain release factor 1 directs the termination of translation in response to the peptide chain termination codons UAG and UAA.</text>
</comment>
<comment type="subcellular location">
    <subcellularLocation>
        <location evidence="1">Cytoplasm</location>
    </subcellularLocation>
</comment>
<comment type="PTM">
    <text evidence="1">Methylated by PrmC. Methylation increases the termination efficiency of RF1.</text>
</comment>
<comment type="similarity">
    <text evidence="1">Belongs to the prokaryotic/mitochondrial release factor family.</text>
</comment>
<proteinExistence type="inferred from homology"/>
<dbReference type="EMBL" id="AE006470">
    <property type="protein sequence ID" value="AAM71371.1"/>
    <property type="molecule type" value="Genomic_DNA"/>
</dbReference>
<dbReference type="RefSeq" id="NP_661029.1">
    <property type="nucleotide sequence ID" value="NC_002932.3"/>
</dbReference>
<dbReference type="RefSeq" id="WP_010931817.1">
    <property type="nucleotide sequence ID" value="NC_002932.3"/>
</dbReference>
<dbReference type="SMR" id="Q8KG45"/>
<dbReference type="STRING" id="194439.CT0123"/>
<dbReference type="EnsemblBacteria" id="AAM71371">
    <property type="protein sequence ID" value="AAM71371"/>
    <property type="gene ID" value="CT0123"/>
</dbReference>
<dbReference type="KEGG" id="cte:CT0123"/>
<dbReference type="PATRIC" id="fig|194439.7.peg.121"/>
<dbReference type="eggNOG" id="COG0216">
    <property type="taxonomic scope" value="Bacteria"/>
</dbReference>
<dbReference type="HOGENOM" id="CLU_036856_0_1_10"/>
<dbReference type="OrthoDB" id="9806673at2"/>
<dbReference type="Proteomes" id="UP000001007">
    <property type="component" value="Chromosome"/>
</dbReference>
<dbReference type="GO" id="GO:0005737">
    <property type="term" value="C:cytoplasm"/>
    <property type="evidence" value="ECO:0007669"/>
    <property type="project" value="UniProtKB-SubCell"/>
</dbReference>
<dbReference type="GO" id="GO:0016149">
    <property type="term" value="F:translation release factor activity, codon specific"/>
    <property type="evidence" value="ECO:0007669"/>
    <property type="project" value="UniProtKB-UniRule"/>
</dbReference>
<dbReference type="FunFam" id="3.30.160.20:FF:000004">
    <property type="entry name" value="Peptide chain release factor 1"/>
    <property type="match status" value="1"/>
</dbReference>
<dbReference type="FunFam" id="3.30.70.1660:FF:000002">
    <property type="entry name" value="Peptide chain release factor 1"/>
    <property type="match status" value="1"/>
</dbReference>
<dbReference type="Gene3D" id="3.30.160.20">
    <property type="match status" value="1"/>
</dbReference>
<dbReference type="Gene3D" id="3.30.70.1660">
    <property type="match status" value="1"/>
</dbReference>
<dbReference type="Gene3D" id="6.10.140.1950">
    <property type="match status" value="1"/>
</dbReference>
<dbReference type="HAMAP" id="MF_00093">
    <property type="entry name" value="Rel_fac_1"/>
    <property type="match status" value="1"/>
</dbReference>
<dbReference type="InterPro" id="IPR005139">
    <property type="entry name" value="PCRF"/>
</dbReference>
<dbReference type="InterPro" id="IPR000352">
    <property type="entry name" value="Pep_chain_release_fac_I"/>
</dbReference>
<dbReference type="InterPro" id="IPR045853">
    <property type="entry name" value="Pep_chain_release_fac_I_sf"/>
</dbReference>
<dbReference type="InterPro" id="IPR050057">
    <property type="entry name" value="Prokaryotic/Mito_RF"/>
</dbReference>
<dbReference type="InterPro" id="IPR004373">
    <property type="entry name" value="RF-1"/>
</dbReference>
<dbReference type="NCBIfam" id="TIGR00019">
    <property type="entry name" value="prfA"/>
    <property type="match status" value="1"/>
</dbReference>
<dbReference type="NCBIfam" id="NF001859">
    <property type="entry name" value="PRK00591.1"/>
    <property type="match status" value="1"/>
</dbReference>
<dbReference type="PANTHER" id="PTHR43804">
    <property type="entry name" value="LD18447P"/>
    <property type="match status" value="1"/>
</dbReference>
<dbReference type="PANTHER" id="PTHR43804:SF7">
    <property type="entry name" value="LD18447P"/>
    <property type="match status" value="1"/>
</dbReference>
<dbReference type="Pfam" id="PF03462">
    <property type="entry name" value="PCRF"/>
    <property type="match status" value="1"/>
</dbReference>
<dbReference type="Pfam" id="PF00472">
    <property type="entry name" value="RF-1"/>
    <property type="match status" value="1"/>
</dbReference>
<dbReference type="SMART" id="SM00937">
    <property type="entry name" value="PCRF"/>
    <property type="match status" value="1"/>
</dbReference>
<dbReference type="SUPFAM" id="SSF75620">
    <property type="entry name" value="Release factor"/>
    <property type="match status" value="1"/>
</dbReference>
<dbReference type="PROSITE" id="PS00745">
    <property type="entry name" value="RF_PROK_I"/>
    <property type="match status" value="1"/>
</dbReference>
<organism>
    <name type="scientific">Chlorobaculum tepidum (strain ATCC 49652 / DSM 12025 / NBRC 103806 / TLS)</name>
    <name type="common">Chlorobium tepidum</name>
    <dbReference type="NCBI Taxonomy" id="194439"/>
    <lineage>
        <taxon>Bacteria</taxon>
        <taxon>Pseudomonadati</taxon>
        <taxon>Chlorobiota</taxon>
        <taxon>Chlorobiia</taxon>
        <taxon>Chlorobiales</taxon>
        <taxon>Chlorobiaceae</taxon>
        <taxon>Chlorobaculum</taxon>
    </lineage>
</organism>
<accession>Q8KG45</accession>
<feature type="chain" id="PRO_0000177657" description="Peptide chain release factor 1">
    <location>
        <begin position="1"/>
        <end position="357"/>
    </location>
</feature>
<feature type="modified residue" description="N5-methylglutamine" evidence="1">
    <location>
        <position position="234"/>
    </location>
</feature>
<gene>
    <name evidence="1" type="primary">prfA</name>
    <name type="ordered locus">CT0123</name>
</gene>
<reference key="1">
    <citation type="journal article" date="2002" name="Proc. Natl. Acad. Sci. U.S.A.">
        <title>The complete genome sequence of Chlorobium tepidum TLS, a photosynthetic, anaerobic, green-sulfur bacterium.</title>
        <authorList>
            <person name="Eisen J.A."/>
            <person name="Nelson K.E."/>
            <person name="Paulsen I.T."/>
            <person name="Heidelberg J.F."/>
            <person name="Wu M."/>
            <person name="Dodson R.J."/>
            <person name="DeBoy R.T."/>
            <person name="Gwinn M.L."/>
            <person name="Nelson W.C."/>
            <person name="Haft D.H."/>
            <person name="Hickey E.K."/>
            <person name="Peterson J.D."/>
            <person name="Durkin A.S."/>
            <person name="Kolonay J.F."/>
            <person name="Yang F."/>
            <person name="Holt I.E."/>
            <person name="Umayam L.A."/>
            <person name="Mason T.M."/>
            <person name="Brenner M."/>
            <person name="Shea T.P."/>
            <person name="Parksey D.S."/>
            <person name="Nierman W.C."/>
            <person name="Feldblyum T.V."/>
            <person name="Hansen C.L."/>
            <person name="Craven M.B."/>
            <person name="Radune D."/>
            <person name="Vamathevan J.J."/>
            <person name="Khouri H.M."/>
            <person name="White O."/>
            <person name="Gruber T.M."/>
            <person name="Ketchum K.A."/>
            <person name="Venter J.C."/>
            <person name="Tettelin H."/>
            <person name="Bryant D.A."/>
            <person name="Fraser C.M."/>
        </authorList>
    </citation>
    <scope>NUCLEOTIDE SEQUENCE [LARGE SCALE GENOMIC DNA]</scope>
    <source>
        <strain>ATCC 49652 / DSM 12025 / NBRC 103806 / TLS</strain>
    </source>
</reference>
<sequence length="357" mass="40601">MFDKLQSIKDKFQTIEQQLSDPEVVADQNRFRKLNKEYSSLKEIVRAYDEWSRTKKQLDEAHSMQKNENDPEMRALVEEEAGELQERLPKLEQQLKILLLPKDEADSRNAIIEIRAGTGGDEAGLFAADLMRMYQRYAERQGWSCQTLEVSEGSVPGSLKEVSLEVSGHNVYGILKFESGVHRVQRVPETETQGRIHTSAASVAVLPEAEEVDVEIRKEDLLIDTFRSGGKGGQNVNKVETAVRITHVPSGIVVACQEERSQLQNRERAMKMLRSKLYDLQIAEQQKSRADLRRSMVTTGDRSAKIRTYNFPQSRVTDHRIGFTSHALPQIMQGELDPLIEALRMHDQAERLQAETA</sequence>
<keyword id="KW-0963">Cytoplasm</keyword>
<keyword id="KW-0488">Methylation</keyword>
<keyword id="KW-0648">Protein biosynthesis</keyword>
<keyword id="KW-1185">Reference proteome</keyword>
<name>RF1_CHLTE</name>
<protein>
    <recommendedName>
        <fullName evidence="1">Peptide chain release factor 1</fullName>
        <shortName evidence="1">RF-1</shortName>
    </recommendedName>
</protein>